<evidence type="ECO:0000255" key="1">
    <source>
        <dbReference type="HAMAP-Rule" id="MF_01865"/>
    </source>
</evidence>
<evidence type="ECO:0000255" key="2">
    <source>
        <dbReference type="PROSITE-ProRule" id="PRU01266"/>
    </source>
</evidence>
<feature type="chain" id="PRO_0000374869" description="Ribosomal protein uS12 methylthiotransferase RimO">
    <location>
        <begin position="1"/>
        <end position="486"/>
    </location>
</feature>
<feature type="domain" description="MTTase N-terminal" evidence="1">
    <location>
        <begin position="9"/>
        <end position="125"/>
    </location>
</feature>
<feature type="domain" description="Radical SAM core" evidence="2">
    <location>
        <begin position="177"/>
        <end position="408"/>
    </location>
</feature>
<feature type="domain" description="TRAM" evidence="1">
    <location>
        <begin position="410"/>
        <end position="482"/>
    </location>
</feature>
<feature type="binding site" evidence="1">
    <location>
        <position position="18"/>
    </location>
    <ligand>
        <name>[4Fe-4S] cluster</name>
        <dbReference type="ChEBI" id="CHEBI:49883"/>
        <label>1</label>
    </ligand>
</feature>
<feature type="binding site" evidence="1">
    <location>
        <position position="54"/>
    </location>
    <ligand>
        <name>[4Fe-4S] cluster</name>
        <dbReference type="ChEBI" id="CHEBI:49883"/>
        <label>1</label>
    </ligand>
</feature>
<feature type="binding site" evidence="1">
    <location>
        <position position="88"/>
    </location>
    <ligand>
        <name>[4Fe-4S] cluster</name>
        <dbReference type="ChEBI" id="CHEBI:49883"/>
        <label>1</label>
    </ligand>
</feature>
<feature type="binding site" evidence="1">
    <location>
        <position position="191"/>
    </location>
    <ligand>
        <name>[4Fe-4S] cluster</name>
        <dbReference type="ChEBI" id="CHEBI:49883"/>
        <label>2</label>
        <note>4Fe-4S-S-AdoMet</note>
    </ligand>
</feature>
<feature type="binding site" evidence="1">
    <location>
        <position position="195"/>
    </location>
    <ligand>
        <name>[4Fe-4S] cluster</name>
        <dbReference type="ChEBI" id="CHEBI:49883"/>
        <label>2</label>
        <note>4Fe-4S-S-AdoMet</note>
    </ligand>
</feature>
<feature type="binding site" evidence="1">
    <location>
        <position position="198"/>
    </location>
    <ligand>
        <name>[4Fe-4S] cluster</name>
        <dbReference type="ChEBI" id="CHEBI:49883"/>
        <label>2</label>
        <note>4Fe-4S-S-AdoMet</note>
    </ligand>
</feature>
<name>RIMO_KINRD</name>
<protein>
    <recommendedName>
        <fullName evidence="1">Ribosomal protein uS12 methylthiotransferase RimO</fullName>
        <shortName evidence="1">uS12 MTTase</shortName>
        <shortName evidence="1">uS12 methylthiotransferase</shortName>
        <ecNumber evidence="1">2.8.4.4</ecNumber>
    </recommendedName>
    <alternativeName>
        <fullName evidence="1">Ribosomal protein uS12 (aspartate-C(3))-methylthiotransferase</fullName>
    </alternativeName>
    <alternativeName>
        <fullName evidence="1">Ribosome maturation factor RimO</fullName>
    </alternativeName>
</protein>
<reference key="1">
    <citation type="journal article" date="2008" name="PLoS ONE">
        <title>Survival in nuclear waste, extreme resistance, and potential applications gleaned from the genome sequence of Kineococcus radiotolerans SRS30216.</title>
        <authorList>
            <person name="Bagwell C.E."/>
            <person name="Bhat S."/>
            <person name="Hawkins G.M."/>
            <person name="Smith B.W."/>
            <person name="Biswas T."/>
            <person name="Hoover T.R."/>
            <person name="Saunders E."/>
            <person name="Han C.S."/>
            <person name="Tsodikov O.V."/>
            <person name="Shimkets L.J."/>
        </authorList>
    </citation>
    <scope>NUCLEOTIDE SEQUENCE [LARGE SCALE GENOMIC DNA]</scope>
    <source>
        <strain>ATCC BAA-149 / DSM 14245 / SRS30216</strain>
    </source>
</reference>
<keyword id="KW-0004">4Fe-4S</keyword>
<keyword id="KW-0963">Cytoplasm</keyword>
<keyword id="KW-0408">Iron</keyword>
<keyword id="KW-0411">Iron-sulfur</keyword>
<keyword id="KW-0479">Metal-binding</keyword>
<keyword id="KW-1185">Reference proteome</keyword>
<keyword id="KW-0949">S-adenosyl-L-methionine</keyword>
<keyword id="KW-0808">Transferase</keyword>
<dbReference type="EC" id="2.8.4.4" evidence="1"/>
<dbReference type="EMBL" id="CP000750">
    <property type="protein sequence ID" value="ABS02972.1"/>
    <property type="molecule type" value="Genomic_DNA"/>
</dbReference>
<dbReference type="RefSeq" id="WP_011981889.1">
    <property type="nucleotide sequence ID" value="NC_009664.2"/>
</dbReference>
<dbReference type="SMR" id="A6W833"/>
<dbReference type="STRING" id="266940.Krad_1484"/>
<dbReference type="KEGG" id="kra:Krad_1484"/>
<dbReference type="eggNOG" id="COG0621">
    <property type="taxonomic scope" value="Bacteria"/>
</dbReference>
<dbReference type="HOGENOM" id="CLU_018697_0_1_11"/>
<dbReference type="OrthoDB" id="9805215at2"/>
<dbReference type="Proteomes" id="UP000001116">
    <property type="component" value="Chromosome"/>
</dbReference>
<dbReference type="GO" id="GO:0005829">
    <property type="term" value="C:cytosol"/>
    <property type="evidence" value="ECO:0007669"/>
    <property type="project" value="TreeGrafter"/>
</dbReference>
<dbReference type="GO" id="GO:0051539">
    <property type="term" value="F:4 iron, 4 sulfur cluster binding"/>
    <property type="evidence" value="ECO:0007669"/>
    <property type="project" value="UniProtKB-UniRule"/>
</dbReference>
<dbReference type="GO" id="GO:0035599">
    <property type="term" value="F:aspartic acid methylthiotransferase activity"/>
    <property type="evidence" value="ECO:0007669"/>
    <property type="project" value="TreeGrafter"/>
</dbReference>
<dbReference type="GO" id="GO:0046872">
    <property type="term" value="F:metal ion binding"/>
    <property type="evidence" value="ECO:0007669"/>
    <property type="project" value="UniProtKB-KW"/>
</dbReference>
<dbReference type="GO" id="GO:0103039">
    <property type="term" value="F:protein methylthiotransferase activity"/>
    <property type="evidence" value="ECO:0007669"/>
    <property type="project" value="UniProtKB-EC"/>
</dbReference>
<dbReference type="GO" id="GO:0006400">
    <property type="term" value="P:tRNA modification"/>
    <property type="evidence" value="ECO:0007669"/>
    <property type="project" value="InterPro"/>
</dbReference>
<dbReference type="CDD" id="cd01335">
    <property type="entry name" value="Radical_SAM"/>
    <property type="match status" value="1"/>
</dbReference>
<dbReference type="FunFam" id="3.80.30.20:FF:000001">
    <property type="entry name" value="tRNA-2-methylthio-N(6)-dimethylallyladenosine synthase 2"/>
    <property type="match status" value="1"/>
</dbReference>
<dbReference type="Gene3D" id="3.40.50.12160">
    <property type="entry name" value="Methylthiotransferase, N-terminal domain"/>
    <property type="match status" value="1"/>
</dbReference>
<dbReference type="Gene3D" id="2.40.50.140">
    <property type="entry name" value="Nucleic acid-binding proteins"/>
    <property type="match status" value="1"/>
</dbReference>
<dbReference type="Gene3D" id="3.80.30.20">
    <property type="entry name" value="tm_1862 like domain"/>
    <property type="match status" value="1"/>
</dbReference>
<dbReference type="HAMAP" id="MF_01865">
    <property type="entry name" value="MTTase_RimO"/>
    <property type="match status" value="1"/>
</dbReference>
<dbReference type="InterPro" id="IPR006638">
    <property type="entry name" value="Elp3/MiaA/NifB-like_rSAM"/>
</dbReference>
<dbReference type="InterPro" id="IPR005839">
    <property type="entry name" value="Methylthiotransferase"/>
</dbReference>
<dbReference type="InterPro" id="IPR020612">
    <property type="entry name" value="Methylthiotransferase_CS"/>
</dbReference>
<dbReference type="InterPro" id="IPR013848">
    <property type="entry name" value="Methylthiotransferase_N"/>
</dbReference>
<dbReference type="InterPro" id="IPR038135">
    <property type="entry name" value="Methylthiotransferase_N_sf"/>
</dbReference>
<dbReference type="InterPro" id="IPR012340">
    <property type="entry name" value="NA-bd_OB-fold"/>
</dbReference>
<dbReference type="InterPro" id="IPR005840">
    <property type="entry name" value="Ribosomal_uS12_MeSTrfase_RimO"/>
</dbReference>
<dbReference type="InterPro" id="IPR007197">
    <property type="entry name" value="rSAM"/>
</dbReference>
<dbReference type="InterPro" id="IPR023404">
    <property type="entry name" value="rSAM_horseshoe"/>
</dbReference>
<dbReference type="InterPro" id="IPR002792">
    <property type="entry name" value="TRAM_dom"/>
</dbReference>
<dbReference type="NCBIfam" id="TIGR01125">
    <property type="entry name" value="30S ribosomal protein S12 methylthiotransferase RimO"/>
    <property type="match status" value="1"/>
</dbReference>
<dbReference type="NCBIfam" id="TIGR00089">
    <property type="entry name" value="MiaB/RimO family radical SAM methylthiotransferase"/>
    <property type="match status" value="1"/>
</dbReference>
<dbReference type="PANTHER" id="PTHR43837">
    <property type="entry name" value="RIBOSOMAL PROTEIN S12 METHYLTHIOTRANSFERASE RIMO"/>
    <property type="match status" value="1"/>
</dbReference>
<dbReference type="PANTHER" id="PTHR43837:SF1">
    <property type="entry name" value="RIBOSOMAL PROTEIN US12 METHYLTHIOTRANSFERASE RIMO"/>
    <property type="match status" value="1"/>
</dbReference>
<dbReference type="Pfam" id="PF04055">
    <property type="entry name" value="Radical_SAM"/>
    <property type="match status" value="1"/>
</dbReference>
<dbReference type="Pfam" id="PF18693">
    <property type="entry name" value="TRAM_2"/>
    <property type="match status" value="1"/>
</dbReference>
<dbReference type="Pfam" id="PF00919">
    <property type="entry name" value="UPF0004"/>
    <property type="match status" value="1"/>
</dbReference>
<dbReference type="SFLD" id="SFLDG01082">
    <property type="entry name" value="B12-binding_domain_containing"/>
    <property type="match status" value="1"/>
</dbReference>
<dbReference type="SFLD" id="SFLDS00029">
    <property type="entry name" value="Radical_SAM"/>
    <property type="match status" value="1"/>
</dbReference>
<dbReference type="SFLD" id="SFLDF00274">
    <property type="entry name" value="ribosomal_protein_S12_methylth"/>
    <property type="match status" value="1"/>
</dbReference>
<dbReference type="SMART" id="SM00729">
    <property type="entry name" value="Elp3"/>
    <property type="match status" value="1"/>
</dbReference>
<dbReference type="SUPFAM" id="SSF102114">
    <property type="entry name" value="Radical SAM enzymes"/>
    <property type="match status" value="1"/>
</dbReference>
<dbReference type="PROSITE" id="PS51449">
    <property type="entry name" value="MTTASE_N"/>
    <property type="match status" value="1"/>
</dbReference>
<dbReference type="PROSITE" id="PS01278">
    <property type="entry name" value="MTTASE_RADICAL"/>
    <property type="match status" value="1"/>
</dbReference>
<dbReference type="PROSITE" id="PS51918">
    <property type="entry name" value="RADICAL_SAM"/>
    <property type="match status" value="1"/>
</dbReference>
<dbReference type="PROSITE" id="PS50926">
    <property type="entry name" value="TRAM"/>
    <property type="match status" value="1"/>
</dbReference>
<sequence length="486" mass="51946">MPPTSGTSRSVALVTLGCARNDVDSEELAGRLADAGWTLVDDADGADVAVVNTCGFVEQAKKDSIDTVLAAADLKEAGRTKAVVAVGCMAERYGKDLAESLPEADAILGFDSYGDLSSHLEAILHGEKPQSHVPRDRRTLLPLAPAERQAARPVIAEPDLPEGLAPASGPRVVRRRLGSGPWAPVKIAAGCDRRCTFCAIPAFRGSFVSRPAEEVLAETRWLAEQGVKEVFLVSENTTSYGKDLGDLRALEALLPHVAAVEGIERVRVSYLQPAEVRPGLLDALTSTPGVVPYFDLSFQHSSPAVLRRMRRFGGTEPFLALLEQVRERHPQAGIRSNVIVGFPGETEADVDELCSFLERARLDVVGVFGYSDEDGTEAETLDGKLPDEVVAARVDRVTRLVEELVTQRAEERLGEVVEVLVESVVDEDGDPHVVGRAAHQGPDVDGETELDLPAGFVVHVGDLVTARVTGVAGADLLAEPLVRATV</sequence>
<organism>
    <name type="scientific">Kineococcus radiotolerans (strain ATCC BAA-149 / DSM 14245 / SRS30216)</name>
    <dbReference type="NCBI Taxonomy" id="266940"/>
    <lineage>
        <taxon>Bacteria</taxon>
        <taxon>Bacillati</taxon>
        <taxon>Actinomycetota</taxon>
        <taxon>Actinomycetes</taxon>
        <taxon>Kineosporiales</taxon>
        <taxon>Kineosporiaceae</taxon>
        <taxon>Kineococcus</taxon>
    </lineage>
</organism>
<gene>
    <name evidence="1" type="primary">rimO</name>
    <name type="ordered locus">Krad_1484</name>
</gene>
<accession>A6W833</accession>
<proteinExistence type="inferred from homology"/>
<comment type="function">
    <text evidence="1">Catalyzes the methylthiolation of an aspartic acid residue of ribosomal protein uS12.</text>
</comment>
<comment type="catalytic activity">
    <reaction evidence="1">
        <text>L-aspartate(89)-[ribosomal protein uS12]-hydrogen + (sulfur carrier)-SH + AH2 + 2 S-adenosyl-L-methionine = 3-methylsulfanyl-L-aspartate(89)-[ribosomal protein uS12]-hydrogen + (sulfur carrier)-H + 5'-deoxyadenosine + L-methionine + A + S-adenosyl-L-homocysteine + 2 H(+)</text>
        <dbReference type="Rhea" id="RHEA:37087"/>
        <dbReference type="Rhea" id="RHEA-COMP:10460"/>
        <dbReference type="Rhea" id="RHEA-COMP:10461"/>
        <dbReference type="Rhea" id="RHEA-COMP:14737"/>
        <dbReference type="Rhea" id="RHEA-COMP:14739"/>
        <dbReference type="ChEBI" id="CHEBI:13193"/>
        <dbReference type="ChEBI" id="CHEBI:15378"/>
        <dbReference type="ChEBI" id="CHEBI:17319"/>
        <dbReference type="ChEBI" id="CHEBI:17499"/>
        <dbReference type="ChEBI" id="CHEBI:29917"/>
        <dbReference type="ChEBI" id="CHEBI:29961"/>
        <dbReference type="ChEBI" id="CHEBI:57844"/>
        <dbReference type="ChEBI" id="CHEBI:57856"/>
        <dbReference type="ChEBI" id="CHEBI:59789"/>
        <dbReference type="ChEBI" id="CHEBI:64428"/>
        <dbReference type="ChEBI" id="CHEBI:73599"/>
        <dbReference type="EC" id="2.8.4.4"/>
    </reaction>
</comment>
<comment type="cofactor">
    <cofactor evidence="1">
        <name>[4Fe-4S] cluster</name>
        <dbReference type="ChEBI" id="CHEBI:49883"/>
    </cofactor>
    <text evidence="1">Binds 2 [4Fe-4S] clusters. One cluster is coordinated with 3 cysteines and an exchangeable S-adenosyl-L-methionine.</text>
</comment>
<comment type="subcellular location">
    <subcellularLocation>
        <location evidence="1">Cytoplasm</location>
    </subcellularLocation>
</comment>
<comment type="similarity">
    <text evidence="1">Belongs to the methylthiotransferase family. RimO subfamily.</text>
</comment>